<name>CAER_PHYSA</name>
<dbReference type="PIR" id="A61357">
    <property type="entry name" value="A61357"/>
</dbReference>
<dbReference type="GO" id="GO:0005576">
    <property type="term" value="C:extracellular region"/>
    <property type="evidence" value="ECO:0007669"/>
    <property type="project" value="UniProtKB-SubCell"/>
</dbReference>
<dbReference type="GO" id="GO:0006952">
    <property type="term" value="P:defense response"/>
    <property type="evidence" value="ECO:0007669"/>
    <property type="project" value="UniProtKB-KW"/>
</dbReference>
<dbReference type="GO" id="GO:0008217">
    <property type="term" value="P:regulation of blood pressure"/>
    <property type="evidence" value="ECO:0007669"/>
    <property type="project" value="UniProtKB-KW"/>
</dbReference>
<dbReference type="InterPro" id="IPR013152">
    <property type="entry name" value="Gastrin/cholecystokinin_CS"/>
</dbReference>
<dbReference type="PROSITE" id="PS00259">
    <property type="entry name" value="GASTRIN"/>
    <property type="match status" value="1"/>
</dbReference>
<accession>Q7LZC4</accession>
<protein>
    <recommendedName>
        <fullName>Phyllocaerulein</fullName>
    </recommendedName>
</protein>
<evidence type="ECO:0000269" key="1">
    <source>
    </source>
</evidence>
<evidence type="ECO:0000305" key="2"/>
<feature type="peptide" id="PRO_0000043887" description="Phyllocaerulein">
    <location>
        <begin position="1"/>
        <end position="9"/>
    </location>
</feature>
<feature type="modified residue" description="Pyrrolidone carboxylic acid" evidence="1">
    <location>
        <position position="1"/>
    </location>
</feature>
<feature type="modified residue" description="Sulfotyrosine" evidence="1">
    <location>
        <position position="3"/>
    </location>
</feature>
<feature type="modified residue" description="Phenylalanine amide" evidence="1">
    <location>
        <position position="9"/>
    </location>
</feature>
<reference key="1">
    <citation type="journal article" date="1969" name="Br. J. Pharmacol.">
        <title>Structure and pharmacological actions of phyllocaerulein, a caerulein-like nonapeptide: its occurrence in extracts of the skin of Phyllomedusa sauvagei and related Phyllomedusa species.</title>
        <authorList>
            <person name="Anastasi A."/>
            <person name="Bertaccini G."/>
            <person name="Cei J.M."/>
            <person name="De Caro G."/>
            <person name="Erspamer V."/>
            <person name="Impicciatore M."/>
        </authorList>
    </citation>
    <scope>PROTEIN SEQUENCE</scope>
    <scope>PYROGLUTAMATE FORMATION AT GLN-1</scope>
    <scope>SULFATION AT TYR-3</scope>
    <scope>AMIDATION AT PHE-9</scope>
    <source>
        <tissue>Skin secretion</tissue>
    </source>
</reference>
<sequence length="9" mass="1176">QEYTGWMDF</sequence>
<organism>
    <name type="scientific">Phyllomedusa sauvagei</name>
    <name type="common">Sauvage's leaf frog</name>
    <dbReference type="NCBI Taxonomy" id="8395"/>
    <lineage>
        <taxon>Eukaryota</taxon>
        <taxon>Metazoa</taxon>
        <taxon>Chordata</taxon>
        <taxon>Craniata</taxon>
        <taxon>Vertebrata</taxon>
        <taxon>Euteleostomi</taxon>
        <taxon>Amphibia</taxon>
        <taxon>Batrachia</taxon>
        <taxon>Anura</taxon>
        <taxon>Neobatrachia</taxon>
        <taxon>Hyloidea</taxon>
        <taxon>Hylidae</taxon>
        <taxon>Phyllomedusinae</taxon>
        <taxon>Phyllomedusa</taxon>
    </lineage>
</organism>
<proteinExistence type="evidence at protein level"/>
<keyword id="KW-0027">Amidation</keyword>
<keyword id="KW-0878">Amphibian defense peptide</keyword>
<keyword id="KW-0903">Direct protein sequencing</keyword>
<keyword id="KW-0382">Hypotensive agent</keyword>
<keyword id="KW-0873">Pyrrolidone carboxylic acid</keyword>
<keyword id="KW-0964">Secreted</keyword>
<keyword id="KW-0765">Sulfation</keyword>
<comment type="function">
    <text>Hypotensive neuropeptide.</text>
</comment>
<comment type="subcellular location">
    <subcellularLocation>
        <location>Secreted</location>
    </subcellularLocation>
</comment>
<comment type="tissue specificity">
    <text>Expressed by the skin dorsal glands.</text>
</comment>
<comment type="similarity">
    <text evidence="2">Belongs to the gastrin/cholecystokinin family.</text>
</comment>